<keyword id="KW-0030">Aminoacyl-tRNA synthetase</keyword>
<keyword id="KW-0067">ATP-binding</keyword>
<keyword id="KW-0963">Cytoplasm</keyword>
<keyword id="KW-0436">Ligase</keyword>
<keyword id="KW-0479">Metal-binding</keyword>
<keyword id="KW-0547">Nucleotide-binding</keyword>
<keyword id="KW-0648">Protein biosynthesis</keyword>
<keyword id="KW-0862">Zinc</keyword>
<protein>
    <recommendedName>
        <fullName evidence="1">Cysteine--tRNA ligase</fullName>
        <ecNumber evidence="1">6.1.1.16</ecNumber>
    </recommendedName>
    <alternativeName>
        <fullName evidence="1">Cysteinyl-tRNA synthetase</fullName>
        <shortName evidence="1">CysRS</shortName>
    </alternativeName>
</protein>
<accession>B2HX34</accession>
<gene>
    <name evidence="1" type="primary">cysS</name>
    <name type="ordered locus">ACICU_01224</name>
</gene>
<evidence type="ECO:0000255" key="1">
    <source>
        <dbReference type="HAMAP-Rule" id="MF_00041"/>
    </source>
</evidence>
<sequence length="473" mass="54170">MQPFVLYNSEQRKKVEFVPRKEGHIDMYVCGMTVYDYCHIGHARVMVAFDYIIRFLRSQGWKVRYIRNITDIDDKIIKRANENGETIQQLTTRFIDAMNEDAANLGCLAPDEAPKATEYIDQMQNMIGNLVNKGAAYPASNGDVYFEVTKFEKYGRLSGRKLEDMQAGASERVDVEVEKKHPFDFVLWKHAKENEPSWASPWGNGRPGWHIECSAMSTCCLGNHFDIHGGGSDLMFPHHENEIAQSEASTGEQYVNYWMHVGFINVDGEKMSKSLGNFFTIRDVMEKFHPEVIRYFIVSSHYRSPVNFSDVALKEAKTSLTRFYHSFKAYQQVYGQTTTEALDQSFIERFNNAMCDDFNTAEAMAVLFELNKELNRAVKEEQADQATVLYSTLRHLTNILGLVQHNVDDFLKSDIGQDALALSDAEIEDFIQQRVDAKKAKDFAKADSIRQSLLEQGVVLEDTRQGTVWRRAD</sequence>
<reference key="1">
    <citation type="journal article" date="2008" name="Antimicrob. Agents Chemother.">
        <title>Whole-genome pyrosequencing of an epidemic multidrug-resistant Acinetobacter baumannii strain belonging to the European clone II group.</title>
        <authorList>
            <person name="Iacono M."/>
            <person name="Villa L."/>
            <person name="Fortini D."/>
            <person name="Bordoni R."/>
            <person name="Imperi F."/>
            <person name="Bonnal R.J."/>
            <person name="Sicheritz-Ponten T."/>
            <person name="De Bellis G."/>
            <person name="Visca P."/>
            <person name="Cassone A."/>
            <person name="Carattoli A."/>
        </authorList>
    </citation>
    <scope>NUCLEOTIDE SEQUENCE [LARGE SCALE GENOMIC DNA]</scope>
    <source>
        <strain>ACICU</strain>
    </source>
</reference>
<comment type="catalytic activity">
    <reaction evidence="1">
        <text>tRNA(Cys) + L-cysteine + ATP = L-cysteinyl-tRNA(Cys) + AMP + diphosphate</text>
        <dbReference type="Rhea" id="RHEA:17773"/>
        <dbReference type="Rhea" id="RHEA-COMP:9661"/>
        <dbReference type="Rhea" id="RHEA-COMP:9679"/>
        <dbReference type="ChEBI" id="CHEBI:30616"/>
        <dbReference type="ChEBI" id="CHEBI:33019"/>
        <dbReference type="ChEBI" id="CHEBI:35235"/>
        <dbReference type="ChEBI" id="CHEBI:78442"/>
        <dbReference type="ChEBI" id="CHEBI:78517"/>
        <dbReference type="ChEBI" id="CHEBI:456215"/>
        <dbReference type="EC" id="6.1.1.16"/>
    </reaction>
</comment>
<comment type="cofactor">
    <cofactor evidence="1">
        <name>Zn(2+)</name>
        <dbReference type="ChEBI" id="CHEBI:29105"/>
    </cofactor>
    <text evidence="1">Binds 1 zinc ion per subunit.</text>
</comment>
<comment type="subunit">
    <text evidence="1">Monomer.</text>
</comment>
<comment type="subcellular location">
    <subcellularLocation>
        <location evidence="1">Cytoplasm</location>
    </subcellularLocation>
</comment>
<comment type="similarity">
    <text evidence="1">Belongs to the class-I aminoacyl-tRNA synthetase family.</text>
</comment>
<organism>
    <name type="scientific">Acinetobacter baumannii (strain ACICU)</name>
    <dbReference type="NCBI Taxonomy" id="405416"/>
    <lineage>
        <taxon>Bacteria</taxon>
        <taxon>Pseudomonadati</taxon>
        <taxon>Pseudomonadota</taxon>
        <taxon>Gammaproteobacteria</taxon>
        <taxon>Moraxellales</taxon>
        <taxon>Moraxellaceae</taxon>
        <taxon>Acinetobacter</taxon>
        <taxon>Acinetobacter calcoaceticus/baumannii complex</taxon>
    </lineage>
</organism>
<feature type="chain" id="PRO_1000090809" description="Cysteine--tRNA ligase">
    <location>
        <begin position="1"/>
        <end position="473"/>
    </location>
</feature>
<feature type="short sequence motif" description="'HIGH' region">
    <location>
        <begin position="32"/>
        <end position="42"/>
    </location>
</feature>
<feature type="short sequence motif" description="'KMSKS' region">
    <location>
        <begin position="270"/>
        <end position="274"/>
    </location>
</feature>
<feature type="binding site" evidence="1">
    <location>
        <position position="30"/>
    </location>
    <ligand>
        <name>Zn(2+)</name>
        <dbReference type="ChEBI" id="CHEBI:29105"/>
    </ligand>
</feature>
<feature type="binding site" evidence="1">
    <location>
        <position position="213"/>
    </location>
    <ligand>
        <name>Zn(2+)</name>
        <dbReference type="ChEBI" id="CHEBI:29105"/>
    </ligand>
</feature>
<feature type="binding site" evidence="1">
    <location>
        <position position="238"/>
    </location>
    <ligand>
        <name>Zn(2+)</name>
        <dbReference type="ChEBI" id="CHEBI:29105"/>
    </ligand>
</feature>
<feature type="binding site" evidence="1">
    <location>
        <position position="242"/>
    </location>
    <ligand>
        <name>Zn(2+)</name>
        <dbReference type="ChEBI" id="CHEBI:29105"/>
    </ligand>
</feature>
<feature type="binding site" evidence="1">
    <location>
        <position position="273"/>
    </location>
    <ligand>
        <name>ATP</name>
        <dbReference type="ChEBI" id="CHEBI:30616"/>
    </ligand>
</feature>
<name>SYC_ACIBC</name>
<proteinExistence type="inferred from homology"/>
<dbReference type="EC" id="6.1.1.16" evidence="1"/>
<dbReference type="EMBL" id="CP000863">
    <property type="protein sequence ID" value="ACC56536.1"/>
    <property type="molecule type" value="Genomic_DNA"/>
</dbReference>
<dbReference type="RefSeq" id="WP_001182287.1">
    <property type="nucleotide sequence ID" value="NZ_CP031380.1"/>
</dbReference>
<dbReference type="SMR" id="B2HX34"/>
<dbReference type="KEGG" id="abc:ACICU_01224"/>
<dbReference type="HOGENOM" id="CLU_013528_0_1_6"/>
<dbReference type="Proteomes" id="UP000008839">
    <property type="component" value="Chromosome"/>
</dbReference>
<dbReference type="GO" id="GO:0005829">
    <property type="term" value="C:cytosol"/>
    <property type="evidence" value="ECO:0007669"/>
    <property type="project" value="TreeGrafter"/>
</dbReference>
<dbReference type="GO" id="GO:0005524">
    <property type="term" value="F:ATP binding"/>
    <property type="evidence" value="ECO:0007669"/>
    <property type="project" value="UniProtKB-UniRule"/>
</dbReference>
<dbReference type="GO" id="GO:0004817">
    <property type="term" value="F:cysteine-tRNA ligase activity"/>
    <property type="evidence" value="ECO:0007669"/>
    <property type="project" value="UniProtKB-UniRule"/>
</dbReference>
<dbReference type="GO" id="GO:0008270">
    <property type="term" value="F:zinc ion binding"/>
    <property type="evidence" value="ECO:0007669"/>
    <property type="project" value="UniProtKB-UniRule"/>
</dbReference>
<dbReference type="GO" id="GO:0006423">
    <property type="term" value="P:cysteinyl-tRNA aminoacylation"/>
    <property type="evidence" value="ECO:0007669"/>
    <property type="project" value="UniProtKB-UniRule"/>
</dbReference>
<dbReference type="CDD" id="cd07963">
    <property type="entry name" value="Anticodon_Ia_Cys"/>
    <property type="match status" value="1"/>
</dbReference>
<dbReference type="CDD" id="cd00672">
    <property type="entry name" value="CysRS_core"/>
    <property type="match status" value="1"/>
</dbReference>
<dbReference type="FunFam" id="3.40.50.620:FF:000009">
    <property type="entry name" value="Cysteine--tRNA ligase"/>
    <property type="match status" value="1"/>
</dbReference>
<dbReference type="Gene3D" id="1.20.120.1910">
    <property type="entry name" value="Cysteine-tRNA ligase, C-terminal anti-codon recognition domain"/>
    <property type="match status" value="1"/>
</dbReference>
<dbReference type="Gene3D" id="3.40.50.620">
    <property type="entry name" value="HUPs"/>
    <property type="match status" value="1"/>
</dbReference>
<dbReference type="HAMAP" id="MF_00041">
    <property type="entry name" value="Cys_tRNA_synth"/>
    <property type="match status" value="1"/>
</dbReference>
<dbReference type="InterPro" id="IPR015803">
    <property type="entry name" value="Cys-tRNA-ligase"/>
</dbReference>
<dbReference type="InterPro" id="IPR015273">
    <property type="entry name" value="Cys-tRNA-synt_Ia_DALR"/>
</dbReference>
<dbReference type="InterPro" id="IPR024909">
    <property type="entry name" value="Cys-tRNA/MSH_ligase"/>
</dbReference>
<dbReference type="InterPro" id="IPR014729">
    <property type="entry name" value="Rossmann-like_a/b/a_fold"/>
</dbReference>
<dbReference type="InterPro" id="IPR032678">
    <property type="entry name" value="tRNA-synt_1_cat_dom"/>
</dbReference>
<dbReference type="InterPro" id="IPR009080">
    <property type="entry name" value="tRNAsynth_Ia_anticodon-bd"/>
</dbReference>
<dbReference type="NCBIfam" id="TIGR00435">
    <property type="entry name" value="cysS"/>
    <property type="match status" value="1"/>
</dbReference>
<dbReference type="PANTHER" id="PTHR10890:SF3">
    <property type="entry name" value="CYSTEINE--TRNA LIGASE, CYTOPLASMIC"/>
    <property type="match status" value="1"/>
</dbReference>
<dbReference type="PANTHER" id="PTHR10890">
    <property type="entry name" value="CYSTEINYL-TRNA SYNTHETASE"/>
    <property type="match status" value="1"/>
</dbReference>
<dbReference type="Pfam" id="PF09190">
    <property type="entry name" value="DALR_2"/>
    <property type="match status" value="1"/>
</dbReference>
<dbReference type="Pfam" id="PF01406">
    <property type="entry name" value="tRNA-synt_1e"/>
    <property type="match status" value="1"/>
</dbReference>
<dbReference type="PRINTS" id="PR00983">
    <property type="entry name" value="TRNASYNTHCYS"/>
</dbReference>
<dbReference type="SMART" id="SM00840">
    <property type="entry name" value="DALR_2"/>
    <property type="match status" value="1"/>
</dbReference>
<dbReference type="SUPFAM" id="SSF47323">
    <property type="entry name" value="Anticodon-binding domain of a subclass of class I aminoacyl-tRNA synthetases"/>
    <property type="match status" value="1"/>
</dbReference>
<dbReference type="SUPFAM" id="SSF52374">
    <property type="entry name" value="Nucleotidylyl transferase"/>
    <property type="match status" value="1"/>
</dbReference>